<proteinExistence type="inferred from homology"/>
<organism>
    <name type="scientific">Nitratiruptor sp. (strain SB155-2)</name>
    <dbReference type="NCBI Taxonomy" id="387092"/>
    <lineage>
        <taxon>Bacteria</taxon>
        <taxon>Pseudomonadati</taxon>
        <taxon>Campylobacterota</taxon>
        <taxon>Epsilonproteobacteria</taxon>
        <taxon>Nautiliales</taxon>
        <taxon>Nitratiruptoraceae</taxon>
        <taxon>Nitratiruptor</taxon>
    </lineage>
</organism>
<sequence>MKAVVILSGGMDSSITAYMAKKDGYEIIAVHFNYGQRTEQKELEAFRAIAGELNAKTYEIDLPFFEQIGASALIDTNIAIPKQGIEPGIPVTYVPFRNGIFLSVAAAIAEKEGADSIYIGVVEEDSSGYPDCREDFIQKMESAINAGTKPETDIKIKTPLIHLRKEDIVQLGLSLGVPLEKTWSCYESEDEACGECDSCRLRLKGFEKAGAKDKIPYKST</sequence>
<name>QUEC_NITSB</name>
<comment type="function">
    <text evidence="1">Catalyzes the ATP-dependent conversion of 7-carboxy-7-deazaguanine (CDG) to 7-cyano-7-deazaguanine (preQ(0)).</text>
</comment>
<comment type="catalytic activity">
    <reaction evidence="1">
        <text>7-carboxy-7-deazaguanine + NH4(+) + ATP = 7-cyano-7-deazaguanine + ADP + phosphate + H2O + H(+)</text>
        <dbReference type="Rhea" id="RHEA:27982"/>
        <dbReference type="ChEBI" id="CHEBI:15377"/>
        <dbReference type="ChEBI" id="CHEBI:15378"/>
        <dbReference type="ChEBI" id="CHEBI:28938"/>
        <dbReference type="ChEBI" id="CHEBI:30616"/>
        <dbReference type="ChEBI" id="CHEBI:43474"/>
        <dbReference type="ChEBI" id="CHEBI:45075"/>
        <dbReference type="ChEBI" id="CHEBI:61036"/>
        <dbReference type="ChEBI" id="CHEBI:456216"/>
        <dbReference type="EC" id="6.3.4.20"/>
    </reaction>
</comment>
<comment type="cofactor">
    <cofactor evidence="1">
        <name>Zn(2+)</name>
        <dbReference type="ChEBI" id="CHEBI:29105"/>
    </cofactor>
    <text evidence="1">Binds 1 zinc ion per subunit.</text>
</comment>
<comment type="pathway">
    <text evidence="1">Purine metabolism; 7-cyano-7-deazaguanine biosynthesis.</text>
</comment>
<comment type="similarity">
    <text evidence="1">Belongs to the QueC family.</text>
</comment>
<gene>
    <name evidence="1" type="primary">queC</name>
    <name type="ordered locus">NIS_0789</name>
</gene>
<feature type="chain" id="PRO_0000336925" description="7-cyano-7-deazaguanine synthase">
    <location>
        <begin position="1"/>
        <end position="220"/>
    </location>
</feature>
<feature type="binding site" evidence="1">
    <location>
        <begin position="7"/>
        <end position="17"/>
    </location>
    <ligand>
        <name>ATP</name>
        <dbReference type="ChEBI" id="CHEBI:30616"/>
    </ligand>
</feature>
<feature type="binding site" evidence="1">
    <location>
        <position position="185"/>
    </location>
    <ligand>
        <name>Zn(2+)</name>
        <dbReference type="ChEBI" id="CHEBI:29105"/>
    </ligand>
</feature>
<feature type="binding site" evidence="1">
    <location>
        <position position="193"/>
    </location>
    <ligand>
        <name>Zn(2+)</name>
        <dbReference type="ChEBI" id="CHEBI:29105"/>
    </ligand>
</feature>
<feature type="binding site" evidence="1">
    <location>
        <position position="196"/>
    </location>
    <ligand>
        <name>Zn(2+)</name>
        <dbReference type="ChEBI" id="CHEBI:29105"/>
    </ligand>
</feature>
<feature type="binding site" evidence="1">
    <location>
        <position position="199"/>
    </location>
    <ligand>
        <name>Zn(2+)</name>
        <dbReference type="ChEBI" id="CHEBI:29105"/>
    </ligand>
</feature>
<protein>
    <recommendedName>
        <fullName evidence="1">7-cyano-7-deazaguanine synthase</fullName>
        <ecNumber evidence="1">6.3.4.20</ecNumber>
    </recommendedName>
    <alternativeName>
        <fullName evidence="1">7-cyano-7-carbaguanine synthase</fullName>
    </alternativeName>
    <alternativeName>
        <fullName evidence="1">PreQ(0) synthase</fullName>
    </alternativeName>
    <alternativeName>
        <fullName evidence="1">Queuosine biosynthesis protein QueC</fullName>
    </alternativeName>
</protein>
<keyword id="KW-0067">ATP-binding</keyword>
<keyword id="KW-0436">Ligase</keyword>
<keyword id="KW-0479">Metal-binding</keyword>
<keyword id="KW-0547">Nucleotide-binding</keyword>
<keyword id="KW-0671">Queuosine biosynthesis</keyword>
<keyword id="KW-1185">Reference proteome</keyword>
<keyword id="KW-0862">Zinc</keyword>
<accession>A6Q342</accession>
<dbReference type="EC" id="6.3.4.20" evidence="1"/>
<dbReference type="EMBL" id="AP009178">
    <property type="protein sequence ID" value="BAF69901.1"/>
    <property type="molecule type" value="Genomic_DNA"/>
</dbReference>
<dbReference type="RefSeq" id="WP_012082164.1">
    <property type="nucleotide sequence ID" value="NC_009662.1"/>
</dbReference>
<dbReference type="SMR" id="A6Q342"/>
<dbReference type="FunCoup" id="A6Q342">
    <property type="interactions" value="142"/>
</dbReference>
<dbReference type="STRING" id="387092.NIS_0789"/>
<dbReference type="KEGG" id="nis:NIS_0789"/>
<dbReference type="eggNOG" id="COG0603">
    <property type="taxonomic scope" value="Bacteria"/>
</dbReference>
<dbReference type="HOGENOM" id="CLU_081854_1_0_7"/>
<dbReference type="InParanoid" id="A6Q342"/>
<dbReference type="OrthoDB" id="9789567at2"/>
<dbReference type="UniPathway" id="UPA00391"/>
<dbReference type="Proteomes" id="UP000001118">
    <property type="component" value="Chromosome"/>
</dbReference>
<dbReference type="GO" id="GO:0005524">
    <property type="term" value="F:ATP binding"/>
    <property type="evidence" value="ECO:0007669"/>
    <property type="project" value="UniProtKB-UniRule"/>
</dbReference>
<dbReference type="GO" id="GO:0016879">
    <property type="term" value="F:ligase activity, forming carbon-nitrogen bonds"/>
    <property type="evidence" value="ECO:0007669"/>
    <property type="project" value="UniProtKB-UniRule"/>
</dbReference>
<dbReference type="GO" id="GO:0008270">
    <property type="term" value="F:zinc ion binding"/>
    <property type="evidence" value="ECO:0007669"/>
    <property type="project" value="UniProtKB-UniRule"/>
</dbReference>
<dbReference type="GO" id="GO:0008616">
    <property type="term" value="P:queuosine biosynthetic process"/>
    <property type="evidence" value="ECO:0007669"/>
    <property type="project" value="UniProtKB-UniRule"/>
</dbReference>
<dbReference type="CDD" id="cd01995">
    <property type="entry name" value="QueC-like"/>
    <property type="match status" value="1"/>
</dbReference>
<dbReference type="Gene3D" id="3.40.50.620">
    <property type="entry name" value="HUPs"/>
    <property type="match status" value="1"/>
</dbReference>
<dbReference type="HAMAP" id="MF_01633">
    <property type="entry name" value="QueC"/>
    <property type="match status" value="1"/>
</dbReference>
<dbReference type="InterPro" id="IPR018317">
    <property type="entry name" value="QueC"/>
</dbReference>
<dbReference type="InterPro" id="IPR014729">
    <property type="entry name" value="Rossmann-like_a/b/a_fold"/>
</dbReference>
<dbReference type="NCBIfam" id="TIGR00364">
    <property type="entry name" value="7-cyano-7-deazaguanine synthase QueC"/>
    <property type="match status" value="1"/>
</dbReference>
<dbReference type="PANTHER" id="PTHR42914">
    <property type="entry name" value="7-CYANO-7-DEAZAGUANINE SYNTHASE"/>
    <property type="match status" value="1"/>
</dbReference>
<dbReference type="PANTHER" id="PTHR42914:SF1">
    <property type="entry name" value="7-CYANO-7-DEAZAGUANINE SYNTHASE"/>
    <property type="match status" value="1"/>
</dbReference>
<dbReference type="Pfam" id="PF06508">
    <property type="entry name" value="QueC"/>
    <property type="match status" value="1"/>
</dbReference>
<dbReference type="PIRSF" id="PIRSF006293">
    <property type="entry name" value="ExsB"/>
    <property type="match status" value="1"/>
</dbReference>
<dbReference type="SUPFAM" id="SSF52402">
    <property type="entry name" value="Adenine nucleotide alpha hydrolases-like"/>
    <property type="match status" value="1"/>
</dbReference>
<reference key="1">
    <citation type="journal article" date="2007" name="Proc. Natl. Acad. Sci. U.S.A.">
        <title>Deep-sea vent epsilon-proteobacterial genomes provide insights into emergence of pathogens.</title>
        <authorList>
            <person name="Nakagawa S."/>
            <person name="Takaki Y."/>
            <person name="Shimamura S."/>
            <person name="Reysenbach A.-L."/>
            <person name="Takai K."/>
            <person name="Horikoshi K."/>
        </authorList>
    </citation>
    <scope>NUCLEOTIDE SEQUENCE [LARGE SCALE GENOMIC DNA]</scope>
    <source>
        <strain>SB155-2</strain>
    </source>
</reference>
<evidence type="ECO:0000255" key="1">
    <source>
        <dbReference type="HAMAP-Rule" id="MF_01633"/>
    </source>
</evidence>